<dbReference type="EMBL" id="AF222894">
    <property type="protein sequence ID" value="AAF30663.1"/>
    <property type="molecule type" value="Genomic_DNA"/>
</dbReference>
<dbReference type="RefSeq" id="WP_006688931.1">
    <property type="nucleotide sequence ID" value="NC_002162.1"/>
</dbReference>
<dbReference type="SMR" id="Q9PQN7"/>
<dbReference type="STRING" id="273119.UU254"/>
<dbReference type="EnsemblBacteria" id="AAF30663">
    <property type="protein sequence ID" value="AAF30663"/>
    <property type="gene ID" value="UU254"/>
</dbReference>
<dbReference type="GeneID" id="29672460"/>
<dbReference type="KEGG" id="uur:UU254"/>
<dbReference type="eggNOG" id="COG0257">
    <property type="taxonomic scope" value="Bacteria"/>
</dbReference>
<dbReference type="HOGENOM" id="CLU_135723_6_2_14"/>
<dbReference type="OrthoDB" id="9802520at2"/>
<dbReference type="Proteomes" id="UP000000423">
    <property type="component" value="Chromosome"/>
</dbReference>
<dbReference type="GO" id="GO:0005737">
    <property type="term" value="C:cytoplasm"/>
    <property type="evidence" value="ECO:0007669"/>
    <property type="project" value="UniProtKB-ARBA"/>
</dbReference>
<dbReference type="GO" id="GO:1990904">
    <property type="term" value="C:ribonucleoprotein complex"/>
    <property type="evidence" value="ECO:0007669"/>
    <property type="project" value="UniProtKB-KW"/>
</dbReference>
<dbReference type="GO" id="GO:0005840">
    <property type="term" value="C:ribosome"/>
    <property type="evidence" value="ECO:0007669"/>
    <property type="project" value="UniProtKB-KW"/>
</dbReference>
<dbReference type="GO" id="GO:0003735">
    <property type="term" value="F:structural constituent of ribosome"/>
    <property type="evidence" value="ECO:0007669"/>
    <property type="project" value="InterPro"/>
</dbReference>
<dbReference type="GO" id="GO:0006412">
    <property type="term" value="P:translation"/>
    <property type="evidence" value="ECO:0007669"/>
    <property type="project" value="UniProtKB-UniRule"/>
</dbReference>
<dbReference type="HAMAP" id="MF_00251">
    <property type="entry name" value="Ribosomal_bL36"/>
    <property type="match status" value="1"/>
</dbReference>
<dbReference type="InterPro" id="IPR000473">
    <property type="entry name" value="Ribosomal_bL36"/>
</dbReference>
<dbReference type="InterPro" id="IPR035977">
    <property type="entry name" value="Ribosomal_bL36_sp"/>
</dbReference>
<dbReference type="NCBIfam" id="TIGR01022">
    <property type="entry name" value="rpmJ_bact"/>
    <property type="match status" value="1"/>
</dbReference>
<dbReference type="PANTHER" id="PTHR42888">
    <property type="entry name" value="50S RIBOSOMAL PROTEIN L36, CHLOROPLASTIC"/>
    <property type="match status" value="1"/>
</dbReference>
<dbReference type="PANTHER" id="PTHR42888:SF1">
    <property type="entry name" value="LARGE RIBOSOMAL SUBUNIT PROTEIN BL36C"/>
    <property type="match status" value="1"/>
</dbReference>
<dbReference type="Pfam" id="PF00444">
    <property type="entry name" value="Ribosomal_L36"/>
    <property type="match status" value="1"/>
</dbReference>
<dbReference type="SUPFAM" id="SSF57840">
    <property type="entry name" value="Ribosomal protein L36"/>
    <property type="match status" value="1"/>
</dbReference>
<dbReference type="PROSITE" id="PS00828">
    <property type="entry name" value="RIBOSOMAL_L36"/>
    <property type="match status" value="1"/>
</dbReference>
<gene>
    <name evidence="1" type="primary">rpmJ</name>
    <name type="synonym">rpl36</name>
    <name type="ordered locus">UU254</name>
</gene>
<proteinExistence type="inferred from homology"/>
<organism>
    <name type="scientific">Ureaplasma parvum serovar 3 (strain ATCC 700970)</name>
    <dbReference type="NCBI Taxonomy" id="273119"/>
    <lineage>
        <taxon>Bacteria</taxon>
        <taxon>Bacillati</taxon>
        <taxon>Mycoplasmatota</taxon>
        <taxon>Mycoplasmoidales</taxon>
        <taxon>Mycoplasmoidaceae</taxon>
        <taxon>Ureaplasma</taxon>
    </lineage>
</organism>
<name>RL36_UREPA</name>
<reference key="1">
    <citation type="journal article" date="2000" name="Nature">
        <title>The complete sequence of the mucosal pathogen Ureaplasma urealyticum.</title>
        <authorList>
            <person name="Glass J.I."/>
            <person name="Lefkowitz E.J."/>
            <person name="Glass J.S."/>
            <person name="Heiner C.R."/>
            <person name="Chen E.Y."/>
            <person name="Cassell G.H."/>
        </authorList>
    </citation>
    <scope>NUCLEOTIDE SEQUENCE [LARGE SCALE GENOMIC DNA]</scope>
    <source>
        <strain>ATCC 700970</strain>
    </source>
</reference>
<sequence>MKVRASVKAICKDCKIVKRSGVVRVICANSKHKQRQG</sequence>
<keyword id="KW-1185">Reference proteome</keyword>
<keyword id="KW-0687">Ribonucleoprotein</keyword>
<keyword id="KW-0689">Ribosomal protein</keyword>
<accession>Q9PQN7</accession>
<protein>
    <recommendedName>
        <fullName evidence="1">Large ribosomal subunit protein bL36</fullName>
    </recommendedName>
    <alternativeName>
        <fullName evidence="2">50S ribosomal protein L36</fullName>
    </alternativeName>
</protein>
<feature type="chain" id="PRO_0000126291" description="Large ribosomal subunit protein bL36">
    <location>
        <begin position="1"/>
        <end position="37"/>
    </location>
</feature>
<comment type="similarity">
    <text evidence="1">Belongs to the bacterial ribosomal protein bL36 family.</text>
</comment>
<evidence type="ECO:0000255" key="1">
    <source>
        <dbReference type="HAMAP-Rule" id="MF_00251"/>
    </source>
</evidence>
<evidence type="ECO:0000305" key="2"/>